<gene>
    <name type="primary">Znf653</name>
    <name type="synonym">Zfp653</name>
    <name type="synonym">Zip67</name>
</gene>
<name>ZN653_MOUSE</name>
<accession>Q6YND2</accession>
<accession>Q8BHT8</accession>
<accession>Q8CI02</accession>
<dbReference type="EMBL" id="AY072705">
    <property type="protein sequence ID" value="AAL66764.1"/>
    <property type="molecule type" value="mRNA"/>
</dbReference>
<dbReference type="EMBL" id="AK089104">
    <property type="protein sequence ID" value="BAC40752.1"/>
    <property type="molecule type" value="mRNA"/>
</dbReference>
<dbReference type="EMBL" id="BC038037">
    <property type="protein sequence ID" value="AAH38037.1"/>
    <property type="molecule type" value="mRNA"/>
</dbReference>
<dbReference type="CCDS" id="CCDS22919.1">
    <molecule id="Q6YND2-1"/>
</dbReference>
<dbReference type="CCDS" id="CCDS80968.1">
    <molecule id="Q6YND2-2"/>
</dbReference>
<dbReference type="RefSeq" id="NP_796292.1">
    <molecule id="Q6YND2-1"/>
    <property type="nucleotide sequence ID" value="NM_177318.3"/>
</dbReference>
<dbReference type="SMR" id="Q6YND2"/>
<dbReference type="FunCoup" id="Q6YND2">
    <property type="interactions" value="2105"/>
</dbReference>
<dbReference type="STRING" id="10090.ENSMUSP00000137064"/>
<dbReference type="GlyGen" id="Q6YND2">
    <property type="glycosylation" value="1 site"/>
</dbReference>
<dbReference type="iPTMnet" id="Q6YND2"/>
<dbReference type="PhosphoSitePlus" id="Q6YND2"/>
<dbReference type="PaxDb" id="10090-ENSMUSP00000137064"/>
<dbReference type="ProteomicsDB" id="275028">
    <molecule id="Q6YND2-1"/>
</dbReference>
<dbReference type="ProteomicsDB" id="275029">
    <molecule id="Q6YND2-2"/>
</dbReference>
<dbReference type="Antibodypedia" id="25888">
    <property type="antibodies" value="19 antibodies from 8 providers"/>
</dbReference>
<dbReference type="DNASU" id="319601"/>
<dbReference type="Ensembl" id="ENSMUST00000043922.7">
    <molecule id="Q6YND2-1"/>
    <property type="protein sequence ID" value="ENSMUSP00000045895.7"/>
    <property type="gene ID" value="ENSMUSG00000038895.17"/>
</dbReference>
<dbReference type="Ensembl" id="ENSMUST00000179605.9">
    <molecule id="Q6YND2-2"/>
    <property type="protein sequence ID" value="ENSMUSP00000137064.2"/>
    <property type="gene ID" value="ENSMUSG00000038895.17"/>
</dbReference>
<dbReference type="GeneID" id="319601"/>
<dbReference type="KEGG" id="mmu:319601"/>
<dbReference type="UCSC" id="uc009onp.1">
    <molecule id="Q6YND2-1"/>
    <property type="organism name" value="mouse"/>
</dbReference>
<dbReference type="UCSC" id="uc012gpl.1">
    <molecule id="Q6YND2-2"/>
    <property type="organism name" value="mouse"/>
</dbReference>
<dbReference type="AGR" id="MGI:2442362"/>
<dbReference type="CTD" id="319601"/>
<dbReference type="MGI" id="MGI:2442362">
    <property type="gene designation" value="Zfp653"/>
</dbReference>
<dbReference type="VEuPathDB" id="HostDB:ENSMUSG00000038895"/>
<dbReference type="eggNOG" id="KOG1721">
    <property type="taxonomic scope" value="Eukaryota"/>
</dbReference>
<dbReference type="GeneTree" id="ENSGT00940000160257"/>
<dbReference type="HOGENOM" id="CLU_037389_0_0_1"/>
<dbReference type="InParanoid" id="Q6YND2"/>
<dbReference type="OMA" id="CAVMEGV"/>
<dbReference type="OrthoDB" id="8685330at2759"/>
<dbReference type="PhylomeDB" id="Q6YND2"/>
<dbReference type="TreeFam" id="TF332664"/>
<dbReference type="BioGRID-ORCS" id="319601">
    <property type="hits" value="3 hits in 61 CRISPR screens"/>
</dbReference>
<dbReference type="ChiTaRS" id="Zfp653">
    <property type="organism name" value="mouse"/>
</dbReference>
<dbReference type="PRO" id="PR:Q6YND2"/>
<dbReference type="Proteomes" id="UP000000589">
    <property type="component" value="Chromosome 9"/>
</dbReference>
<dbReference type="RNAct" id="Q6YND2">
    <property type="molecule type" value="protein"/>
</dbReference>
<dbReference type="Bgee" id="ENSMUSG00000038895">
    <property type="expression patterns" value="Expressed in primary oocyte and 178 other cell types or tissues"/>
</dbReference>
<dbReference type="GO" id="GO:0005576">
    <property type="term" value="C:extracellular region"/>
    <property type="evidence" value="ECO:0007669"/>
    <property type="project" value="GOC"/>
</dbReference>
<dbReference type="GO" id="GO:0005634">
    <property type="term" value="C:nucleus"/>
    <property type="evidence" value="ECO:0007669"/>
    <property type="project" value="UniProtKB-SubCell"/>
</dbReference>
<dbReference type="GO" id="GO:0050682">
    <property type="term" value="F:AF-2 domain binding"/>
    <property type="evidence" value="ECO:0007669"/>
    <property type="project" value="Ensembl"/>
</dbReference>
<dbReference type="GO" id="GO:0003677">
    <property type="term" value="F:DNA binding"/>
    <property type="evidence" value="ECO:0007669"/>
    <property type="project" value="UniProtKB-KW"/>
</dbReference>
<dbReference type="GO" id="GO:0140297">
    <property type="term" value="F:DNA-binding transcription factor binding"/>
    <property type="evidence" value="ECO:0007669"/>
    <property type="project" value="Ensembl"/>
</dbReference>
<dbReference type="GO" id="GO:0003714">
    <property type="term" value="F:transcription corepressor activity"/>
    <property type="evidence" value="ECO:0000250"/>
    <property type="project" value="UniProtKB"/>
</dbReference>
<dbReference type="GO" id="GO:0008270">
    <property type="term" value="F:zinc ion binding"/>
    <property type="evidence" value="ECO:0007669"/>
    <property type="project" value="UniProtKB-KW"/>
</dbReference>
<dbReference type="GO" id="GO:1900116">
    <property type="term" value="P:extracellular negative regulation of signal transduction"/>
    <property type="evidence" value="ECO:0000250"/>
    <property type="project" value="UniProtKB"/>
</dbReference>
<dbReference type="GO" id="GO:0000122">
    <property type="term" value="P:negative regulation of transcription by RNA polymerase II"/>
    <property type="evidence" value="ECO:0000250"/>
    <property type="project" value="UniProtKB"/>
</dbReference>
<dbReference type="FunFam" id="3.30.160.60:FF:000183">
    <property type="entry name" value="E3 ubiquitin-protein ligase ZFP91"/>
    <property type="match status" value="1"/>
</dbReference>
<dbReference type="FunFam" id="3.30.160.60:FF:000651">
    <property type="entry name" value="Putative zinc finger protein 653"/>
    <property type="match status" value="1"/>
</dbReference>
<dbReference type="FunFam" id="3.30.160.60:FF:000685">
    <property type="entry name" value="Zinc finger protein 653"/>
    <property type="match status" value="1"/>
</dbReference>
<dbReference type="Gene3D" id="3.30.160.60">
    <property type="entry name" value="Classic Zinc Finger"/>
    <property type="match status" value="4"/>
</dbReference>
<dbReference type="InterPro" id="IPR051061">
    <property type="entry name" value="Zinc_finger_trans_reg"/>
</dbReference>
<dbReference type="InterPro" id="IPR036236">
    <property type="entry name" value="Znf_C2H2_sf"/>
</dbReference>
<dbReference type="InterPro" id="IPR013087">
    <property type="entry name" value="Znf_C2H2_type"/>
</dbReference>
<dbReference type="PANTHER" id="PTHR46179">
    <property type="entry name" value="ZINC FINGER PROTEIN"/>
    <property type="match status" value="1"/>
</dbReference>
<dbReference type="PANTHER" id="PTHR46179:SF9">
    <property type="entry name" value="ZINC FINGER PROTEIN 653"/>
    <property type="match status" value="1"/>
</dbReference>
<dbReference type="Pfam" id="PF00096">
    <property type="entry name" value="zf-C2H2"/>
    <property type="match status" value="3"/>
</dbReference>
<dbReference type="SMART" id="SM00355">
    <property type="entry name" value="ZnF_C2H2"/>
    <property type="match status" value="5"/>
</dbReference>
<dbReference type="SUPFAM" id="SSF57667">
    <property type="entry name" value="beta-beta-alpha zinc fingers"/>
    <property type="match status" value="3"/>
</dbReference>
<dbReference type="PROSITE" id="PS00028">
    <property type="entry name" value="ZINC_FINGER_C2H2_1"/>
    <property type="match status" value="5"/>
</dbReference>
<dbReference type="PROSITE" id="PS50157">
    <property type="entry name" value="ZINC_FINGER_C2H2_2"/>
    <property type="match status" value="4"/>
</dbReference>
<evidence type="ECO:0000250" key="1"/>
<evidence type="ECO:0000255" key="2">
    <source>
        <dbReference type="PROSITE-ProRule" id="PRU00042"/>
    </source>
</evidence>
<evidence type="ECO:0000256" key="3">
    <source>
        <dbReference type="SAM" id="MobiDB-lite"/>
    </source>
</evidence>
<evidence type="ECO:0000269" key="4">
    <source>
    </source>
</evidence>
<evidence type="ECO:0000303" key="5">
    <source>
    </source>
</evidence>
<evidence type="ECO:0000305" key="6"/>
<protein>
    <recommendedName>
        <fullName>Zinc finger protein 653</fullName>
    </recommendedName>
    <alternativeName>
        <fullName>67 kDa zinc finger protein</fullName>
    </alternativeName>
    <alternativeName>
        <fullName>Zinc finger protein Zip67</fullName>
    </alternativeName>
</protein>
<reference key="1">
    <citation type="journal article" date="2003" name="Mol. Endocrinol.">
        <title>Cloning and characterization of a novel zinc finger protein that modulates the transcriptional activity of nuclear receptors.</title>
        <authorList>
            <person name="Borud B."/>
            <person name="Mellgren G."/>
            <person name="Lund J."/>
            <person name="Bakke M."/>
        </authorList>
    </citation>
    <scope>NUCLEOTIDE SEQUENCE [MRNA] (ISOFORM 2)</scope>
    <scope>TISSUE SPECIFICITY</scope>
    <source>
        <strain>BALB/cJ</strain>
        <tissue>Testis</tissue>
    </source>
</reference>
<reference key="2">
    <citation type="journal article" date="2004" name="Genome Res.">
        <title>The status, quality, and expansion of the NIH full-length cDNA project: the Mammalian Gene Collection (MGC).</title>
        <authorList>
            <consortium name="The MGC Project Team"/>
        </authorList>
    </citation>
    <scope>NUCLEOTIDE SEQUENCE [LARGE SCALE MRNA] (ISOFORM 1)</scope>
    <source>
        <strain>FVB/N</strain>
        <tissue>Salivary gland</tissue>
    </source>
</reference>
<reference key="3">
    <citation type="journal article" date="2005" name="Science">
        <title>The transcriptional landscape of the mammalian genome.</title>
        <authorList>
            <person name="Carninci P."/>
            <person name="Kasukawa T."/>
            <person name="Katayama S."/>
            <person name="Gough J."/>
            <person name="Frith M.C."/>
            <person name="Maeda N."/>
            <person name="Oyama R."/>
            <person name="Ravasi T."/>
            <person name="Lenhard B."/>
            <person name="Wells C."/>
            <person name="Kodzius R."/>
            <person name="Shimokawa K."/>
            <person name="Bajic V.B."/>
            <person name="Brenner S.E."/>
            <person name="Batalov S."/>
            <person name="Forrest A.R."/>
            <person name="Zavolan M."/>
            <person name="Davis M.J."/>
            <person name="Wilming L.G."/>
            <person name="Aidinis V."/>
            <person name="Allen J.E."/>
            <person name="Ambesi-Impiombato A."/>
            <person name="Apweiler R."/>
            <person name="Aturaliya R.N."/>
            <person name="Bailey T.L."/>
            <person name="Bansal M."/>
            <person name="Baxter L."/>
            <person name="Beisel K.W."/>
            <person name="Bersano T."/>
            <person name="Bono H."/>
            <person name="Chalk A.M."/>
            <person name="Chiu K.P."/>
            <person name="Choudhary V."/>
            <person name="Christoffels A."/>
            <person name="Clutterbuck D.R."/>
            <person name="Crowe M.L."/>
            <person name="Dalla E."/>
            <person name="Dalrymple B.P."/>
            <person name="de Bono B."/>
            <person name="Della Gatta G."/>
            <person name="di Bernardo D."/>
            <person name="Down T."/>
            <person name="Engstrom P."/>
            <person name="Fagiolini M."/>
            <person name="Faulkner G."/>
            <person name="Fletcher C.F."/>
            <person name="Fukushima T."/>
            <person name="Furuno M."/>
            <person name="Futaki S."/>
            <person name="Gariboldi M."/>
            <person name="Georgii-Hemming P."/>
            <person name="Gingeras T.R."/>
            <person name="Gojobori T."/>
            <person name="Green R.E."/>
            <person name="Gustincich S."/>
            <person name="Harbers M."/>
            <person name="Hayashi Y."/>
            <person name="Hensch T.K."/>
            <person name="Hirokawa N."/>
            <person name="Hill D."/>
            <person name="Huminiecki L."/>
            <person name="Iacono M."/>
            <person name="Ikeo K."/>
            <person name="Iwama A."/>
            <person name="Ishikawa T."/>
            <person name="Jakt M."/>
            <person name="Kanapin A."/>
            <person name="Katoh M."/>
            <person name="Kawasawa Y."/>
            <person name="Kelso J."/>
            <person name="Kitamura H."/>
            <person name="Kitano H."/>
            <person name="Kollias G."/>
            <person name="Krishnan S.P."/>
            <person name="Kruger A."/>
            <person name="Kummerfeld S.K."/>
            <person name="Kurochkin I.V."/>
            <person name="Lareau L.F."/>
            <person name="Lazarevic D."/>
            <person name="Lipovich L."/>
            <person name="Liu J."/>
            <person name="Liuni S."/>
            <person name="McWilliam S."/>
            <person name="Madan Babu M."/>
            <person name="Madera M."/>
            <person name="Marchionni L."/>
            <person name="Matsuda H."/>
            <person name="Matsuzawa S."/>
            <person name="Miki H."/>
            <person name="Mignone F."/>
            <person name="Miyake S."/>
            <person name="Morris K."/>
            <person name="Mottagui-Tabar S."/>
            <person name="Mulder N."/>
            <person name="Nakano N."/>
            <person name="Nakauchi H."/>
            <person name="Ng P."/>
            <person name="Nilsson R."/>
            <person name="Nishiguchi S."/>
            <person name="Nishikawa S."/>
            <person name="Nori F."/>
            <person name="Ohara O."/>
            <person name="Okazaki Y."/>
            <person name="Orlando V."/>
            <person name="Pang K.C."/>
            <person name="Pavan W.J."/>
            <person name="Pavesi G."/>
            <person name="Pesole G."/>
            <person name="Petrovsky N."/>
            <person name="Piazza S."/>
            <person name="Reed J."/>
            <person name="Reid J.F."/>
            <person name="Ring B.Z."/>
            <person name="Ringwald M."/>
            <person name="Rost B."/>
            <person name="Ruan Y."/>
            <person name="Salzberg S.L."/>
            <person name="Sandelin A."/>
            <person name="Schneider C."/>
            <person name="Schoenbach C."/>
            <person name="Sekiguchi K."/>
            <person name="Semple C.A."/>
            <person name="Seno S."/>
            <person name="Sessa L."/>
            <person name="Sheng Y."/>
            <person name="Shibata Y."/>
            <person name="Shimada H."/>
            <person name="Shimada K."/>
            <person name="Silva D."/>
            <person name="Sinclair B."/>
            <person name="Sperling S."/>
            <person name="Stupka E."/>
            <person name="Sugiura K."/>
            <person name="Sultana R."/>
            <person name="Takenaka Y."/>
            <person name="Taki K."/>
            <person name="Tammoja K."/>
            <person name="Tan S.L."/>
            <person name="Tang S."/>
            <person name="Taylor M.S."/>
            <person name="Tegner J."/>
            <person name="Teichmann S.A."/>
            <person name="Ueda H.R."/>
            <person name="van Nimwegen E."/>
            <person name="Verardo R."/>
            <person name="Wei C.L."/>
            <person name="Yagi K."/>
            <person name="Yamanishi H."/>
            <person name="Zabarovsky E."/>
            <person name="Zhu S."/>
            <person name="Zimmer A."/>
            <person name="Hide W."/>
            <person name="Bult C."/>
            <person name="Grimmond S.M."/>
            <person name="Teasdale R.D."/>
            <person name="Liu E.T."/>
            <person name="Brusic V."/>
            <person name="Quackenbush J."/>
            <person name="Wahlestedt C."/>
            <person name="Mattick J.S."/>
            <person name="Hume D.A."/>
            <person name="Kai C."/>
            <person name="Sasaki D."/>
            <person name="Tomaru Y."/>
            <person name="Fukuda S."/>
            <person name="Kanamori-Katayama M."/>
            <person name="Suzuki M."/>
            <person name="Aoki J."/>
            <person name="Arakawa T."/>
            <person name="Iida J."/>
            <person name="Imamura K."/>
            <person name="Itoh M."/>
            <person name="Kato T."/>
            <person name="Kawaji H."/>
            <person name="Kawagashira N."/>
            <person name="Kawashima T."/>
            <person name="Kojima M."/>
            <person name="Kondo S."/>
            <person name="Konno H."/>
            <person name="Nakano K."/>
            <person name="Ninomiya N."/>
            <person name="Nishio T."/>
            <person name="Okada M."/>
            <person name="Plessy C."/>
            <person name="Shibata K."/>
            <person name="Shiraki T."/>
            <person name="Suzuki S."/>
            <person name="Tagami M."/>
            <person name="Waki K."/>
            <person name="Watahiki A."/>
            <person name="Okamura-Oho Y."/>
            <person name="Suzuki H."/>
            <person name="Kawai J."/>
            <person name="Hayashizaki Y."/>
        </authorList>
    </citation>
    <scope>NUCLEOTIDE SEQUENCE [LARGE SCALE MRNA] OF 59-615 (ISOFORM 1)</scope>
    <source>
        <strain>NOD</strain>
        <tissue>Thymus</tissue>
    </source>
</reference>
<sequence length="615" mass="67517">MAERAPEPGAEAEAGAGGEAAAEEGAAGRKARGRPRLTESDRARRRLESRKKYDVRRVYLGEAHGPWVDLRRRSGWSDAKLAAYLISLERGQRSGRHGKPWEQVPKKPKRKKRRRRNVNCLKNVVIWYEDHKHRCPYEPHLAELDPTFGLYTTAVWQCEAGHRYFQDLHSPLKPLSDSEPDSDKVGSGLVAGSSDSSSSGSSSDSEEPPETQPAKASAAAAALTPASPTGSSGLITQEGVHIPFDVHHVESLAEQGTPLCQNPAGSGPEALETVVCVPVPMQVGTGPGTLFENMPQEALGEVVASCPVSGMVPGSQVIIIAGPGYDALTAEGIRLNVAAGGGTPSSSLGEEVPCAMMEGVAAYTQTEPEGTQHSTMDTTSIASIETKKEKEDLYMLKEEKEDSVAPELAELAATVPENAEAEAEVDGEELDSSEMSAIIYEIPKEPEKRRRSKRSRVMDADGLLEMFHCPYEGCSQVYVALSSFQNHVNLVHRKGKTKVCPHPGCGKKFYLSNHLRRHMIIHSGVREFTCETCGKSFKRKNHLEVHRRTHTGETPLQCEICGYQCRQRASLNWHMKKHTAEVQYNFTCDRCGKRFEKLDSVKFHTLKSHPDHKPT</sequence>
<feature type="chain" id="PRO_0000253345" description="Zinc finger protein 653">
    <location>
        <begin position="1"/>
        <end position="615"/>
    </location>
</feature>
<feature type="zinc finger region" description="C2H2-type 1" evidence="2">
    <location>
        <begin position="467"/>
        <end position="492"/>
    </location>
</feature>
<feature type="zinc finger region" description="C2H2-type 2" evidence="2">
    <location>
        <begin position="498"/>
        <end position="522"/>
    </location>
</feature>
<feature type="zinc finger region" description="C2H2-type 3" evidence="2">
    <location>
        <begin position="528"/>
        <end position="550"/>
    </location>
</feature>
<feature type="zinc finger region" description="C2H2-type 4" evidence="2">
    <location>
        <begin position="556"/>
        <end position="578"/>
    </location>
</feature>
<feature type="zinc finger region" description="C2H2-type 5" evidence="2">
    <location>
        <begin position="586"/>
        <end position="609"/>
    </location>
</feature>
<feature type="region of interest" description="Disordered" evidence="3">
    <location>
        <begin position="1"/>
        <end position="46"/>
    </location>
</feature>
<feature type="region of interest" description="Disordered" evidence="3">
    <location>
        <begin position="93"/>
        <end position="115"/>
    </location>
</feature>
<feature type="region of interest" description="Disordered" evidence="3">
    <location>
        <begin position="174"/>
        <end position="235"/>
    </location>
</feature>
<feature type="compositionally biased region" description="Low complexity" evidence="3">
    <location>
        <begin position="7"/>
        <end position="25"/>
    </location>
</feature>
<feature type="compositionally biased region" description="Basic residues" evidence="3">
    <location>
        <begin position="106"/>
        <end position="115"/>
    </location>
</feature>
<feature type="compositionally biased region" description="Low complexity" evidence="3">
    <location>
        <begin position="192"/>
        <end position="203"/>
    </location>
</feature>
<feature type="compositionally biased region" description="Low complexity" evidence="3">
    <location>
        <begin position="212"/>
        <end position="232"/>
    </location>
</feature>
<feature type="splice variant" id="VSP_021015" description="In isoform 2." evidence="5">
    <original>K</original>
    <variation>KDTTPCHPV</variation>
    <location>
        <position position="388"/>
    </location>
</feature>
<feature type="sequence conflict" description="In Ref. 1; AAL66764." evidence="6" ref="1">
    <original>D</original>
    <variation>V</variation>
    <location>
        <position position="41"/>
    </location>
</feature>
<feature type="sequence conflict" description="In Ref. 1; AAL66764." evidence="6" ref="1">
    <original>V</original>
    <variation>A</variation>
    <location>
        <position position="275"/>
    </location>
</feature>
<feature type="sequence conflict" description="In Ref. 1; AAL66764." evidence="6" ref="1">
    <original>G</original>
    <variation>D</variation>
    <location>
        <position position="504"/>
    </location>
</feature>
<organism>
    <name type="scientific">Mus musculus</name>
    <name type="common">Mouse</name>
    <dbReference type="NCBI Taxonomy" id="10090"/>
    <lineage>
        <taxon>Eukaryota</taxon>
        <taxon>Metazoa</taxon>
        <taxon>Chordata</taxon>
        <taxon>Craniata</taxon>
        <taxon>Vertebrata</taxon>
        <taxon>Euteleostomi</taxon>
        <taxon>Mammalia</taxon>
        <taxon>Eutheria</taxon>
        <taxon>Euarchontoglires</taxon>
        <taxon>Glires</taxon>
        <taxon>Rodentia</taxon>
        <taxon>Myomorpha</taxon>
        <taxon>Muroidea</taxon>
        <taxon>Muridae</taxon>
        <taxon>Murinae</taxon>
        <taxon>Mus</taxon>
        <taxon>Mus</taxon>
    </lineage>
</organism>
<proteinExistence type="evidence at transcript level"/>
<comment type="function">
    <text evidence="1">Transcriptional repressor. May repress NR5A1, PPARG, NR1H3, NR4A2, ESR1 and NR3C1 transcriptional activity (By similarity).</text>
</comment>
<comment type="subunit">
    <text evidence="1">Interacts with NR5A1.</text>
</comment>
<comment type="subcellular location">
    <subcellularLocation>
        <location evidence="6">Nucleus</location>
    </subcellularLocation>
</comment>
<comment type="alternative products">
    <event type="alternative splicing"/>
    <isoform>
        <id>Q6YND2-1</id>
        <name>1</name>
        <sequence type="displayed"/>
    </isoform>
    <isoform>
        <id>Q6YND2-2</id>
        <name>2</name>
        <sequence type="described" ref="VSP_021015"/>
    </isoform>
</comment>
<comment type="tissue specificity">
    <text evidence="4">Highly expressed in testis and spleen. Moderately expressed in lung, adrenal gland, uterus, and ovary. Very low expression in pancreas, heart, skeletal muscle, adipose tissue, kidney, and liver.</text>
</comment>
<comment type="similarity">
    <text evidence="6">Belongs to the krueppel C2H2-type zinc-finger protein family.</text>
</comment>
<keyword id="KW-0025">Alternative splicing</keyword>
<keyword id="KW-0238">DNA-binding</keyword>
<keyword id="KW-0479">Metal-binding</keyword>
<keyword id="KW-0539">Nucleus</keyword>
<keyword id="KW-1185">Reference proteome</keyword>
<keyword id="KW-0677">Repeat</keyword>
<keyword id="KW-0678">Repressor</keyword>
<keyword id="KW-0804">Transcription</keyword>
<keyword id="KW-0805">Transcription regulation</keyword>
<keyword id="KW-0862">Zinc</keyword>
<keyword id="KW-0863">Zinc-finger</keyword>